<protein>
    <recommendedName>
        <fullName>Dexamethasone-induced Ras-related protein 1</fullName>
    </recommendedName>
</protein>
<proteinExistence type="evidence at protein level"/>
<name>RASD1_RAT</name>
<dbReference type="EMBL" id="AF239157">
    <property type="protein sequence ID" value="AAF43090.1"/>
    <property type="molecule type" value="mRNA"/>
</dbReference>
<dbReference type="EMBL" id="BC099136">
    <property type="protein sequence ID" value="AAH99136.1"/>
    <property type="molecule type" value="mRNA"/>
</dbReference>
<dbReference type="RefSeq" id="NP_001257883.1">
    <property type="nucleotide sequence ID" value="NM_001270954.1"/>
</dbReference>
<dbReference type="RefSeq" id="XP_008766093.1">
    <property type="nucleotide sequence ID" value="XM_008767871.4"/>
</dbReference>
<dbReference type="RefSeq" id="XP_008766094.1">
    <property type="nucleotide sequence ID" value="XM_008767872.2"/>
</dbReference>
<dbReference type="RefSeq" id="XP_017453012.1">
    <property type="nucleotide sequence ID" value="XM_017597523.1"/>
</dbReference>
<dbReference type="RefSeq" id="XP_038942720.1">
    <property type="nucleotide sequence ID" value="XM_039086792.2"/>
</dbReference>
<dbReference type="SMR" id="Q9JKF8"/>
<dbReference type="CORUM" id="Q9JKF8"/>
<dbReference type="FunCoup" id="Q9JKF8">
    <property type="interactions" value="990"/>
</dbReference>
<dbReference type="STRING" id="10116.ENSRNOP00000004475"/>
<dbReference type="PhosphoSitePlus" id="Q9JKF8"/>
<dbReference type="PaxDb" id="10116-ENSRNOP00000004475"/>
<dbReference type="Ensembl" id="ENSRNOT00000004475.7">
    <property type="protein sequence ID" value="ENSRNOP00000004475.4"/>
    <property type="gene ID" value="ENSRNOG00000003348.7"/>
</dbReference>
<dbReference type="GeneID" id="64455"/>
<dbReference type="KEGG" id="rno:64455"/>
<dbReference type="UCSC" id="RGD:619727">
    <property type="organism name" value="rat"/>
</dbReference>
<dbReference type="AGR" id="RGD:619727"/>
<dbReference type="CTD" id="51655"/>
<dbReference type="RGD" id="619727">
    <property type="gene designation" value="Rasd1"/>
</dbReference>
<dbReference type="eggNOG" id="KOG0395">
    <property type="taxonomic scope" value="Eukaryota"/>
</dbReference>
<dbReference type="GeneTree" id="ENSGT00940000161274"/>
<dbReference type="HOGENOM" id="CLU_041217_9_3_1"/>
<dbReference type="InParanoid" id="Q9JKF8"/>
<dbReference type="OMA" id="CKASRGV"/>
<dbReference type="OrthoDB" id="265044at2759"/>
<dbReference type="PhylomeDB" id="Q9JKF8"/>
<dbReference type="TreeFam" id="TF316238"/>
<dbReference type="PRO" id="PR:Q9JKF8"/>
<dbReference type="Proteomes" id="UP000002494">
    <property type="component" value="Chromosome 10"/>
</dbReference>
<dbReference type="Bgee" id="ENSRNOG00000003348">
    <property type="expression patterns" value="Expressed in ovary and 20 other cell types or tissues"/>
</dbReference>
<dbReference type="GO" id="GO:0005737">
    <property type="term" value="C:cytoplasm"/>
    <property type="evidence" value="ECO:0000314"/>
    <property type="project" value="UniProtKB"/>
</dbReference>
<dbReference type="GO" id="GO:0005634">
    <property type="term" value="C:nucleus"/>
    <property type="evidence" value="ECO:0000314"/>
    <property type="project" value="UniProtKB"/>
</dbReference>
<dbReference type="GO" id="GO:0048471">
    <property type="term" value="C:perinuclear region of cytoplasm"/>
    <property type="evidence" value="ECO:0000314"/>
    <property type="project" value="UniProtKB"/>
</dbReference>
<dbReference type="GO" id="GO:0005886">
    <property type="term" value="C:plasma membrane"/>
    <property type="evidence" value="ECO:0007669"/>
    <property type="project" value="UniProtKB-SubCell"/>
</dbReference>
<dbReference type="GO" id="GO:0016529">
    <property type="term" value="C:sarcoplasmic reticulum"/>
    <property type="evidence" value="ECO:0000266"/>
    <property type="project" value="RGD"/>
</dbReference>
<dbReference type="GO" id="GO:0031681">
    <property type="term" value="F:G-protein beta-subunit binding"/>
    <property type="evidence" value="ECO:0000318"/>
    <property type="project" value="GO_Central"/>
</dbReference>
<dbReference type="GO" id="GO:0005525">
    <property type="term" value="F:GTP binding"/>
    <property type="evidence" value="ECO:0007669"/>
    <property type="project" value="UniProtKB-KW"/>
</dbReference>
<dbReference type="GO" id="GO:0003924">
    <property type="term" value="F:GTPase activity"/>
    <property type="evidence" value="ECO:0007669"/>
    <property type="project" value="InterPro"/>
</dbReference>
<dbReference type="GO" id="GO:0045892">
    <property type="term" value="P:negative regulation of DNA-templated transcription"/>
    <property type="evidence" value="ECO:0000315"/>
    <property type="project" value="UniProtKB"/>
</dbReference>
<dbReference type="GO" id="GO:0007263">
    <property type="term" value="P:nitric oxide mediated signal transduction"/>
    <property type="evidence" value="ECO:0000314"/>
    <property type="project" value="RGD"/>
</dbReference>
<dbReference type="GO" id="GO:0007165">
    <property type="term" value="P:signal transduction"/>
    <property type="evidence" value="ECO:0000318"/>
    <property type="project" value="GO_Central"/>
</dbReference>
<dbReference type="CDD" id="cd04143">
    <property type="entry name" value="Rhes_like"/>
    <property type="match status" value="1"/>
</dbReference>
<dbReference type="FunFam" id="3.40.50.300:FF:000475">
    <property type="entry name" value="GTP-binding protein Rhes"/>
    <property type="match status" value="1"/>
</dbReference>
<dbReference type="Gene3D" id="3.40.50.300">
    <property type="entry name" value="P-loop containing nucleotide triphosphate hydrolases"/>
    <property type="match status" value="1"/>
</dbReference>
<dbReference type="InterPro" id="IPR027417">
    <property type="entry name" value="P-loop_NTPase"/>
</dbReference>
<dbReference type="InterPro" id="IPR005225">
    <property type="entry name" value="Small_GTP-bd"/>
</dbReference>
<dbReference type="InterPro" id="IPR001806">
    <property type="entry name" value="Small_GTPase"/>
</dbReference>
<dbReference type="InterPro" id="IPR052236">
    <property type="entry name" value="Small_GTPase_RasD"/>
</dbReference>
<dbReference type="NCBIfam" id="TIGR00231">
    <property type="entry name" value="small_GTP"/>
    <property type="match status" value="1"/>
</dbReference>
<dbReference type="PANTHER" id="PTHR46149:SF4">
    <property type="entry name" value="DEXAMETHASONE-INDUCED RAS-RELATED PROTEIN 1"/>
    <property type="match status" value="1"/>
</dbReference>
<dbReference type="PANTHER" id="PTHR46149">
    <property type="entry name" value="MIP08469P"/>
    <property type="match status" value="1"/>
</dbReference>
<dbReference type="Pfam" id="PF00071">
    <property type="entry name" value="Ras"/>
    <property type="match status" value="1"/>
</dbReference>
<dbReference type="PRINTS" id="PR00449">
    <property type="entry name" value="RASTRNSFRMNG"/>
</dbReference>
<dbReference type="SMART" id="SM00175">
    <property type="entry name" value="RAB"/>
    <property type="match status" value="1"/>
</dbReference>
<dbReference type="SMART" id="SM00176">
    <property type="entry name" value="RAN"/>
    <property type="match status" value="1"/>
</dbReference>
<dbReference type="SMART" id="SM00173">
    <property type="entry name" value="RAS"/>
    <property type="match status" value="1"/>
</dbReference>
<dbReference type="SMART" id="SM00174">
    <property type="entry name" value="RHO"/>
    <property type="match status" value="1"/>
</dbReference>
<dbReference type="SUPFAM" id="SSF52540">
    <property type="entry name" value="P-loop containing nucleoside triphosphate hydrolases"/>
    <property type="match status" value="1"/>
</dbReference>
<dbReference type="PROSITE" id="PS51421">
    <property type="entry name" value="RAS"/>
    <property type="match status" value="1"/>
</dbReference>
<evidence type="ECO:0000250" key="1"/>
<evidence type="ECO:0000250" key="2">
    <source>
        <dbReference type="UniProtKB" id="Q9Y272"/>
    </source>
</evidence>
<evidence type="ECO:0000269" key="3">
    <source>
    </source>
</evidence>
<evidence type="ECO:0000269" key="4">
    <source>
    </source>
</evidence>
<evidence type="ECO:0000305" key="5"/>
<gene>
    <name type="primary">Rasd1</name>
    <name type="synonym">Dexras1</name>
</gene>
<sequence length="280" mass="31714">MKLAAMIKKMCPSDSELSIPAKNCYRMVILGSSKVGKTAIVSRFLTGRFEDAYTPTIEDFHRKFYSIRGEVYQLDILDTSGNHPFPAMRRLSILTGDVFILVFSLDNRDSFEEVQRLKQQILDTKSCLKNKTKENVDVPLVICGNKGDRDFYREVEQREIEQLVGDDPQRCAYFEISAKKNSSLDQMFRALFAMAKLPSEMSPDLHRKVSVQYCDVLHKKALRNKKLLRAGSGGGGDHGDAFGILAPFARRPSVHSDLMYIREKTSVSSQAKDKERCVIS</sequence>
<comment type="function">
    <text>Small GTPase. Negatively regulates the transcription regulation activity of the APBB1/FE65-APP complex via its interaction with APBB1/FE65.</text>
</comment>
<comment type="subunit">
    <text evidence="3 4">Forms a ternary complex with CAPON and NOS1. Component of a complex, at least composed of APBB1, RASD1/DEXRAS1 and APP. Interacts with APBB1/FE65. Forms.</text>
</comment>
<comment type="subcellular location">
    <subcellularLocation>
        <location evidence="5">Cell membrane</location>
        <topology evidence="5">Lipid-anchor</topology>
        <orientation evidence="5">Cytoplasmic side</orientation>
    </subcellularLocation>
    <subcellularLocation>
        <location evidence="4">Cytoplasm</location>
        <location evidence="4">Perinuclear region</location>
    </subcellularLocation>
    <subcellularLocation>
        <location evidence="4">Nucleus</location>
    </subcellularLocation>
</comment>
<comment type="tissue specificity">
    <text evidence="3">Prominently found in brain at both mRNA and protein levels. Moderate expression in testis and lung. Slightly expressed in heart, spleen, skeletal muscle, liver and kidney.</text>
</comment>
<comment type="PTM">
    <text evidence="1">S-nitrosylation stimulates guanine-nucleotide exchange activity.</text>
</comment>
<comment type="similarity">
    <text evidence="5">Belongs to the small GTPase superfamily. RasD family.</text>
</comment>
<keyword id="KW-1003">Cell membrane</keyword>
<keyword id="KW-0963">Cytoplasm</keyword>
<keyword id="KW-0342">GTP-binding</keyword>
<keyword id="KW-0449">Lipoprotein</keyword>
<keyword id="KW-0472">Membrane</keyword>
<keyword id="KW-0488">Methylation</keyword>
<keyword id="KW-0547">Nucleotide-binding</keyword>
<keyword id="KW-0539">Nucleus</keyword>
<keyword id="KW-0636">Prenylation</keyword>
<keyword id="KW-1185">Reference proteome</keyword>
<keyword id="KW-0702">S-nitrosylation</keyword>
<accession>Q9JKF8</accession>
<accession>Q4KLL2</accession>
<organism>
    <name type="scientific">Rattus norvegicus</name>
    <name type="common">Rat</name>
    <dbReference type="NCBI Taxonomy" id="10116"/>
    <lineage>
        <taxon>Eukaryota</taxon>
        <taxon>Metazoa</taxon>
        <taxon>Chordata</taxon>
        <taxon>Craniata</taxon>
        <taxon>Vertebrata</taxon>
        <taxon>Euteleostomi</taxon>
        <taxon>Mammalia</taxon>
        <taxon>Eutheria</taxon>
        <taxon>Euarchontoglires</taxon>
        <taxon>Glires</taxon>
        <taxon>Rodentia</taxon>
        <taxon>Myomorpha</taxon>
        <taxon>Muroidea</taxon>
        <taxon>Muridae</taxon>
        <taxon>Murinae</taxon>
        <taxon>Rattus</taxon>
    </lineage>
</organism>
<reference key="1">
    <citation type="journal article" date="2000" name="Neuron">
        <title>Dexras1: a G protein specifically coupled to neuronal nitric oxide synthase via CAPON.</title>
        <authorList>
            <person name="Fang M."/>
            <person name="Jaffrey S.R."/>
            <person name="Sawa A."/>
            <person name="Ye K."/>
            <person name="Luo X."/>
            <person name="Snyder S.H."/>
        </authorList>
    </citation>
    <scope>NUCLEOTIDE SEQUENCE [MRNA]</scope>
    <scope>INTERACTION WITH CAPON AND NOS1</scope>
    <scope>TISSUE SPECIFICITY</scope>
</reference>
<reference key="2">
    <citation type="journal article" date="2004" name="Genome Res.">
        <title>The status, quality, and expansion of the NIH full-length cDNA project: the Mammalian Gene Collection (MGC).</title>
        <authorList>
            <consortium name="The MGC Project Team"/>
        </authorList>
    </citation>
    <scope>NUCLEOTIDE SEQUENCE [LARGE SCALE MRNA]</scope>
    <source>
        <tissue>Testis</tissue>
    </source>
</reference>
<reference key="3">
    <citation type="journal article" date="2008" name="J. Biol. Chem.">
        <title>Dexras1 interacts with FE65 to regulate FE65-amyloid precursor protein-dependent transcription.</title>
        <authorList>
            <person name="Lau K.-F."/>
            <person name="Chan W.-M."/>
            <person name="Perkinton M.S."/>
            <person name="Tudor E.L."/>
            <person name="Chang R.C.C."/>
            <person name="Chan H.-Y."/>
            <person name="McLoughlin D.M."/>
            <person name="Miller C.C.J."/>
        </authorList>
    </citation>
    <scope>SUBCELLULAR LOCATION</scope>
    <scope>IDENTIFICATION IN A COMPLEX WITH APBB1 AND APP</scope>
    <scope>INTERACTION WITH APBB1</scope>
    <scope>MUTAGENESIS OF ALA-178</scope>
</reference>
<feature type="chain" id="PRO_0000082719" description="Dexamethasone-induced Ras-related protein 1">
    <location>
        <begin position="1"/>
        <end position="277"/>
    </location>
</feature>
<feature type="propeptide" id="PRO_0000281374" description="Removed in mature form" evidence="1">
    <location>
        <begin position="278"/>
        <end position="280"/>
    </location>
</feature>
<feature type="short sequence motif" description="Effector region">
    <location>
        <begin position="53"/>
        <end position="61"/>
    </location>
</feature>
<feature type="binding site" evidence="1">
    <location>
        <begin position="31"/>
        <end position="38"/>
    </location>
    <ligand>
        <name>GTP</name>
        <dbReference type="ChEBI" id="CHEBI:37565"/>
    </ligand>
</feature>
<feature type="binding site" evidence="1">
    <location>
        <begin position="78"/>
        <end position="82"/>
    </location>
    <ligand>
        <name>GTP</name>
        <dbReference type="ChEBI" id="CHEBI:37565"/>
    </ligand>
</feature>
<feature type="binding site" evidence="1">
    <location>
        <begin position="145"/>
        <end position="148"/>
    </location>
    <ligand>
        <name>GTP</name>
        <dbReference type="ChEBI" id="CHEBI:37565"/>
    </ligand>
</feature>
<feature type="modified residue" description="S-nitrosocysteine" evidence="2">
    <location>
        <position position="11"/>
    </location>
</feature>
<feature type="modified residue" description="Cysteine methyl ester" evidence="1">
    <location>
        <position position="277"/>
    </location>
</feature>
<feature type="lipid moiety-binding region" description="S-farnesyl cysteine" evidence="1">
    <location>
        <position position="277"/>
    </location>
</feature>
<feature type="mutagenesis site" description="Constitively active mutant. Does not affect interaction with APBB1/FE65." evidence="4">
    <original>A</original>
    <variation>V</variation>
    <location>
        <position position="178"/>
    </location>
</feature>